<name>YO20_ADEG1</name>
<organismHost>
    <name type="scientific">Galliformes</name>
    <dbReference type="NCBI Taxonomy" id="8976"/>
</organismHost>
<dbReference type="EMBL" id="U46933">
    <property type="protein sequence ID" value="AAC54921.1"/>
    <property type="molecule type" value="Genomic_DNA"/>
</dbReference>
<dbReference type="RefSeq" id="NP_043895.1">
    <property type="nucleotide sequence ID" value="NC_001720.1"/>
</dbReference>
<dbReference type="KEGG" id="vg:1733463"/>
<dbReference type="Proteomes" id="UP000001594">
    <property type="component" value="Segment"/>
</dbReference>
<organism>
    <name type="scientific">Fowl adenovirus A serotype 1 (strain CELO / Phelps)</name>
    <name type="common">FAdV-1</name>
    <name type="synonym">Avian adenovirus gal1 (strain Phelps)</name>
    <dbReference type="NCBI Taxonomy" id="10553"/>
    <lineage>
        <taxon>Viruses</taxon>
        <taxon>Varidnaviria</taxon>
        <taxon>Bamfordvirae</taxon>
        <taxon>Preplasmiviricota</taxon>
        <taxon>Tectiliviricetes</taxon>
        <taxon>Rowavirales</taxon>
        <taxon>Adenoviridae</taxon>
        <taxon>Aviadenovirus</taxon>
        <taxon>Fowl aviadenovirus A</taxon>
    </lineage>
</organism>
<proteinExistence type="predicted"/>
<protein>
    <recommendedName>
        <fullName>Uncharacterized protein ORF20</fullName>
    </recommendedName>
</protein>
<sequence length="271" mass="31353">MERLNEYRINRAVASLRCFDNDLMRRLHSSVTVLVTVRSAKFVCFKRRDYVLMNCIVRIVSALHLNRAEKTALLHYLSRRLLFITPGMKYDLEPWMLARRKTDFKFFTTGFLIAEKISVKMALRSMSFEVSFSQVPSSVPFVRSPVVLMNACRVTVTATIMVETISRSSAVTQPVCLRSMLRVMVSPELWPIVSQGLCYFPGYRRLSYANVEEWVFHVHGKYGESHPECFGQCKQCSTRQPLSLFCSAQLAYLRNVFMERRARVAGERPYS</sequence>
<reference key="1">
    <citation type="journal article" date="1996" name="J. Virol.">
        <title>The complete DNA sequence and genomic organization of the avian adenovirus CELO.</title>
        <authorList>
            <person name="Chiocca S."/>
            <person name="Kurzbauer R."/>
            <person name="Schaffner G."/>
            <person name="Baker A."/>
            <person name="Mautner V."/>
            <person name="Cotten M."/>
        </authorList>
    </citation>
    <scope>NUCLEOTIDE SEQUENCE [LARGE SCALE GENOMIC DNA]</scope>
</reference>
<keyword id="KW-1185">Reference proteome</keyword>
<gene>
    <name type="ORF">20</name>
</gene>
<feature type="chain" id="PRO_0000339003" description="Uncharacterized protein ORF20">
    <location>
        <begin position="1"/>
        <end position="271"/>
    </location>
</feature>
<accession>Q64765</accession>